<protein>
    <recommendedName>
        <fullName>ATPase expression protein 2, mitochondrial</fullName>
    </recommendedName>
</protein>
<accession>C7GTL7</accession>
<comment type="function">
    <text evidence="1">Required for translation of the mitochondrial OLI1 transcript coding for the mitochondrial ATP synthase subunit 9.</text>
</comment>
<comment type="subunit">
    <text evidence="1">Binds to the 5'UTR of the OLI1 mRNA.</text>
</comment>
<comment type="subcellular location">
    <subcellularLocation>
        <location evidence="1">Mitochondrion</location>
    </subcellularLocation>
</comment>
<comment type="similarity">
    <text evidence="3">Belongs to the AEP2 family.</text>
</comment>
<dbReference type="EMBL" id="ACFL01000262">
    <property type="protein sequence ID" value="EEU05865.1"/>
    <property type="molecule type" value="Genomic_DNA"/>
</dbReference>
<dbReference type="OrthoDB" id="34352at4893"/>
<dbReference type="Proteomes" id="UP000008073">
    <property type="component" value="Unassembled WGS sequence"/>
</dbReference>
<dbReference type="GO" id="GO:0005739">
    <property type="term" value="C:mitochondrion"/>
    <property type="evidence" value="ECO:0007669"/>
    <property type="project" value="UniProtKB-SubCell"/>
</dbReference>
<dbReference type="GO" id="GO:0003723">
    <property type="term" value="F:RNA binding"/>
    <property type="evidence" value="ECO:0007669"/>
    <property type="project" value="UniProtKB-KW"/>
</dbReference>
<dbReference type="GO" id="GO:0006417">
    <property type="term" value="P:regulation of translation"/>
    <property type="evidence" value="ECO:0007669"/>
    <property type="project" value="UniProtKB-KW"/>
</dbReference>
<dbReference type="InterPro" id="IPR024319">
    <property type="entry name" value="ATPase_expression_mit"/>
</dbReference>
<dbReference type="Pfam" id="PF12921">
    <property type="entry name" value="ATP13"/>
    <property type="match status" value="1"/>
</dbReference>
<name>AEP2_YEAS2</name>
<organism>
    <name type="scientific">Saccharomyces cerevisiae (strain JAY291)</name>
    <name type="common">Baker's yeast</name>
    <dbReference type="NCBI Taxonomy" id="574961"/>
    <lineage>
        <taxon>Eukaryota</taxon>
        <taxon>Fungi</taxon>
        <taxon>Dikarya</taxon>
        <taxon>Ascomycota</taxon>
        <taxon>Saccharomycotina</taxon>
        <taxon>Saccharomycetes</taxon>
        <taxon>Saccharomycetales</taxon>
        <taxon>Saccharomycetaceae</taxon>
        <taxon>Saccharomyces</taxon>
    </lineage>
</organism>
<gene>
    <name type="primary">AEP2</name>
    <name type="synonym">ATP13</name>
    <name type="ORF">C1Q_03764</name>
</gene>
<keyword id="KW-0496">Mitochondrion</keyword>
<keyword id="KW-0694">RNA-binding</keyword>
<keyword id="KW-0809">Transit peptide</keyword>
<keyword id="KW-0810">Translation regulation</keyword>
<reference key="1">
    <citation type="journal article" date="2009" name="Genome Res.">
        <title>Genome structure of a Saccharomyces cerevisiae strain widely used in bioethanol production.</title>
        <authorList>
            <person name="Argueso J.L."/>
            <person name="Carazzolle M.F."/>
            <person name="Mieczkowski P.A."/>
            <person name="Duarte F.M."/>
            <person name="Netto O.V.C."/>
            <person name="Missawa S.K."/>
            <person name="Galzerani F."/>
            <person name="Costa G.G.L."/>
            <person name="Vidal R.O."/>
            <person name="Noronha M.F."/>
            <person name="Dominska M."/>
            <person name="Andrietta M.G.S."/>
            <person name="Andrietta S.R."/>
            <person name="Cunha A.F."/>
            <person name="Gomes L.H."/>
            <person name="Tavares F.C.A."/>
            <person name="Alcarde A.R."/>
            <person name="Dietrich F.S."/>
            <person name="McCusker J.H."/>
            <person name="Petes T.D."/>
            <person name="Pereira G.A.G."/>
        </authorList>
    </citation>
    <scope>NUCLEOTIDE SEQUENCE [LARGE SCALE GENOMIC DNA]</scope>
    <source>
        <strain>JAY291</strain>
    </source>
</reference>
<sequence length="580" mass="67550">MWINRLVKHPSYSVLRFYTKRLCTVSVKSLREFGVLPNSTICHSVYPRRTYVMGRAVINDILIKKSYSTHTVCAIDRSKDENNGSAYDKFEAKGIPIDVHTLKRIISSSGMDESEFSKSISYLFAKTVDPEPKDVLSLEDLSFLLNKLYTQRFQIRRICRDINAKYSEFWFKLFSLYAEKVDAKRNQVNLRNTKLDACEIFDANLMIKNFIELGQLGKAQKILSFILDRNPDILLSPKNADISTIVHFLQLRCGALAPYWKIPDNSEQKQGFLRKMVRLGAKNTSIRLSSTYKAMDHQTLLKIADLALQEKKLLNSEDLLSTLIQSFGHLGQTQILERCIEHIWQISPQEFPSHVVIKHRGCYPSSKILVSILVSFYFNDHDLHRGLSILDSFIKHYPDVKLDALFWRRLFQLSHFAWTPANDKKATSVVRCWHLMKQWYASKRLRPSVDYETLRQLYDIMKKTGNFPLGIDVLRSFKPGIERTRAENAGKVNNIIIKYQKCIIKELVNRGRFSAVREFIDSYGFDRKMTKDLNIFCANRMFLRSKKMKNKIENKKEREKVRLDSFDDDEDDGMIIGSLW</sequence>
<proteinExistence type="inferred from homology"/>
<evidence type="ECO:0000250" key="1"/>
<evidence type="ECO:0000255" key="2"/>
<evidence type="ECO:0000305" key="3"/>
<feature type="transit peptide" description="Mitochondrion" evidence="2">
    <location>
        <begin position="1"/>
        <end position="40"/>
    </location>
</feature>
<feature type="chain" id="PRO_0000405635" description="ATPase expression protein 2, mitochondrial">
    <location>
        <begin position="41"/>
        <end position="580"/>
    </location>
</feature>